<accession>P47912</accession>
<accession>D6W073</accession>
<accession>Q05743</accession>
<proteinExistence type="evidence at protein level"/>
<protein>
    <recommendedName>
        <fullName>Long-chain-fatty-acid--CoA ligase 4</fullName>
        <ecNumber evidence="5">6.2.1.3</ecNumber>
    </recommendedName>
    <alternativeName>
        <fullName>Fatty acid activator 4</fullName>
    </alternativeName>
    <alternativeName>
        <fullName>Fatty acyl-CoA synthetase</fullName>
        <shortName>FACS</shortName>
    </alternativeName>
    <alternativeName>
        <fullName>Long-chain acyl-CoA synthetase 4</fullName>
    </alternativeName>
</protein>
<dbReference type="EC" id="6.2.1.3" evidence="5"/>
<dbReference type="EMBL" id="Z48744">
    <property type="protein sequence ID" value="CAA88635.1"/>
    <property type="molecule type" value="Genomic_DNA"/>
</dbReference>
<dbReference type="EMBL" id="Z48756">
    <property type="protein sequence ID" value="CAA88656.1"/>
    <property type="molecule type" value="Genomic_DNA"/>
</dbReference>
<dbReference type="EMBL" id="BK006946">
    <property type="protein sequence ID" value="DAA10147.1"/>
    <property type="molecule type" value="Genomic_DNA"/>
</dbReference>
<dbReference type="PIR" id="S56060">
    <property type="entry name" value="S56060"/>
</dbReference>
<dbReference type="RefSeq" id="NP_013974.1">
    <property type="nucleotide sequence ID" value="NM_001182754.1"/>
</dbReference>
<dbReference type="SMR" id="P47912"/>
<dbReference type="BioGRID" id="35425">
    <property type="interactions" value="171"/>
</dbReference>
<dbReference type="DIP" id="DIP-4361N"/>
<dbReference type="FunCoup" id="P47912">
    <property type="interactions" value="818"/>
</dbReference>
<dbReference type="IntAct" id="P47912">
    <property type="interactions" value="55"/>
</dbReference>
<dbReference type="MINT" id="P47912"/>
<dbReference type="STRING" id="4932.YMR246W"/>
<dbReference type="SwissLipids" id="SLP:000000130"/>
<dbReference type="GlyGen" id="P47912">
    <property type="glycosylation" value="1 site"/>
</dbReference>
<dbReference type="iPTMnet" id="P47912"/>
<dbReference type="PaxDb" id="4932-YMR246W"/>
<dbReference type="PeptideAtlas" id="P47912"/>
<dbReference type="EnsemblFungi" id="YMR246W_mRNA">
    <property type="protein sequence ID" value="YMR246W"/>
    <property type="gene ID" value="YMR246W"/>
</dbReference>
<dbReference type="GeneID" id="855288"/>
<dbReference type="KEGG" id="sce:YMR246W"/>
<dbReference type="AGR" id="SGD:S000004860"/>
<dbReference type="SGD" id="S000004860">
    <property type="gene designation" value="FAA4"/>
</dbReference>
<dbReference type="VEuPathDB" id="FungiDB:YMR246W"/>
<dbReference type="eggNOG" id="KOG1180">
    <property type="taxonomic scope" value="Eukaryota"/>
</dbReference>
<dbReference type="GeneTree" id="ENSGT00940000171609"/>
<dbReference type="HOGENOM" id="CLU_000022_45_2_1"/>
<dbReference type="InParanoid" id="P47912"/>
<dbReference type="OMA" id="RWEPVFH"/>
<dbReference type="OrthoDB" id="1700726at2759"/>
<dbReference type="BioCyc" id="YEAST:YMR246W-MONOMER"/>
<dbReference type="Reactome" id="R-SCE-434313">
    <property type="pathway name" value="Intracellular metabolism of fatty acids regulates insulin secretion"/>
</dbReference>
<dbReference type="Reactome" id="R-SCE-75876">
    <property type="pathway name" value="Synthesis of very long-chain fatty acyl-CoAs"/>
</dbReference>
<dbReference type="BioGRID-ORCS" id="855288">
    <property type="hits" value="0 hits in 10 CRISPR screens"/>
</dbReference>
<dbReference type="CD-CODE" id="E03F929F">
    <property type="entry name" value="Stress granule"/>
</dbReference>
<dbReference type="PRO" id="PR:P47912"/>
<dbReference type="Proteomes" id="UP000002311">
    <property type="component" value="Chromosome XIII"/>
</dbReference>
<dbReference type="RNAct" id="P47912">
    <property type="molecule type" value="protein"/>
</dbReference>
<dbReference type="GO" id="GO:0005737">
    <property type="term" value="C:cytoplasm"/>
    <property type="evidence" value="ECO:0007005"/>
    <property type="project" value="SGD"/>
</dbReference>
<dbReference type="GO" id="GO:0010494">
    <property type="term" value="C:cytoplasmic stress granule"/>
    <property type="evidence" value="ECO:0007005"/>
    <property type="project" value="SGD"/>
</dbReference>
<dbReference type="GO" id="GO:0005783">
    <property type="term" value="C:endoplasmic reticulum"/>
    <property type="evidence" value="ECO:0000318"/>
    <property type="project" value="GO_Central"/>
</dbReference>
<dbReference type="GO" id="GO:0005811">
    <property type="term" value="C:lipid droplet"/>
    <property type="evidence" value="ECO:0000314"/>
    <property type="project" value="SGD"/>
</dbReference>
<dbReference type="GO" id="GO:0005886">
    <property type="term" value="C:plasma membrane"/>
    <property type="evidence" value="ECO:0000314"/>
    <property type="project" value="SGD"/>
</dbReference>
<dbReference type="GO" id="GO:0005524">
    <property type="term" value="F:ATP binding"/>
    <property type="evidence" value="ECO:0007669"/>
    <property type="project" value="UniProtKB-KW"/>
</dbReference>
<dbReference type="GO" id="GO:0004467">
    <property type="term" value="F:long-chain fatty acid-CoA ligase activity"/>
    <property type="evidence" value="ECO:0000314"/>
    <property type="project" value="SGD"/>
</dbReference>
<dbReference type="GO" id="GO:0044539">
    <property type="term" value="P:long-chain fatty acid import into cell"/>
    <property type="evidence" value="ECO:0000316"/>
    <property type="project" value="SGD"/>
</dbReference>
<dbReference type="GO" id="GO:0001676">
    <property type="term" value="P:long-chain fatty acid metabolic process"/>
    <property type="evidence" value="ECO:0000318"/>
    <property type="project" value="GO_Central"/>
</dbReference>
<dbReference type="GO" id="GO:0035336">
    <property type="term" value="P:long-chain fatty-acyl-CoA metabolic process"/>
    <property type="evidence" value="ECO:0000315"/>
    <property type="project" value="SGD"/>
</dbReference>
<dbReference type="GO" id="GO:1905329">
    <property type="term" value="P:sphingoid long-chain base transport"/>
    <property type="evidence" value="ECO:0000316"/>
    <property type="project" value="SGD"/>
</dbReference>
<dbReference type="CDD" id="cd17639">
    <property type="entry name" value="LC_FACS_euk1"/>
    <property type="match status" value="1"/>
</dbReference>
<dbReference type="Gene3D" id="3.40.50.12780">
    <property type="entry name" value="N-terminal domain of ligase-like"/>
    <property type="match status" value="1"/>
</dbReference>
<dbReference type="InterPro" id="IPR020845">
    <property type="entry name" value="AMP-binding_CS"/>
</dbReference>
<dbReference type="InterPro" id="IPR000873">
    <property type="entry name" value="AMP-dep_synth/lig_dom"/>
</dbReference>
<dbReference type="InterPro" id="IPR042099">
    <property type="entry name" value="ANL_N_sf"/>
</dbReference>
<dbReference type="PANTHER" id="PTHR43272:SF83">
    <property type="entry name" value="ACYL-COA SYNTHETASE LONG-CHAIN, ISOFORM J"/>
    <property type="match status" value="1"/>
</dbReference>
<dbReference type="PANTHER" id="PTHR43272">
    <property type="entry name" value="LONG-CHAIN-FATTY-ACID--COA LIGASE"/>
    <property type="match status" value="1"/>
</dbReference>
<dbReference type="Pfam" id="PF00501">
    <property type="entry name" value="AMP-binding"/>
    <property type="match status" value="1"/>
</dbReference>
<dbReference type="SUPFAM" id="SSF56801">
    <property type="entry name" value="Acetyl-CoA synthetase-like"/>
    <property type="match status" value="1"/>
</dbReference>
<dbReference type="PROSITE" id="PS00455">
    <property type="entry name" value="AMP_BINDING"/>
    <property type="match status" value="1"/>
</dbReference>
<name>LCF4_YEAST</name>
<gene>
    <name type="primary">FAA4</name>
    <name type="ordered locus">YMR246W</name>
    <name type="ORF">YM9408.08</name>
</gene>
<sequence>MTEQYSVAVGEAANEHETAPRRNIRVKDQPLIRPINSSASTLYEFALECFTKGGKRDGMAWRDIIDIHETKKTIVKRVDGKDKPIEKTWLYYELTPYITMTYEEMICVMHDIGRGLIKIGVKPNGENKFHIFASTSHKWMKTFLGCMSQGIPVVTAYDTLGESGLIHSMVETDSVAIFTDNQLLSKLAVPLKTAKNVKFVIHNEPIDPSDKRQNGKLYKAAKDAVDKIKEVRPDIKIYSFDEIIEIGKKAKDEVELHFPKPEDPACIMYTSGSTGTPKGVVLTHYNIVAGIGGVGHNVIGWIGPTDRIIAFLPLAHIFELTFEFEAFYWNGILGYANVKTLTPTSTRNCQGDLMEFKPTVMVGVAAVWETVRKGILAKINELPGWSQTLFWTVYALKERNIPCSGLLSGLIFKRIREATGGNLRFILNGGSAISIDAQKFLSNLLCPMLIGYGLTEGVANACVLEPEHFDYGIAGDLVGTITAKLVDVEDLGYFAKNNQGELLFKGAPICSEYYKNPEETAAAFTDDGWFRTGDIAEWTPKGQVKIIDRKKNLVKTLNGEYIALEKLESIYRSNPYVQNICVYADENKVKPVGIVVPNLGHLSKLAIELGIMVPGEDVESYIHEKKLQDAVCKDMLSTAKSQGLNGIELLCGIVFFEEEWTPENGLVTSAQKLKRRDILAAVKPDVERVYKENT</sequence>
<evidence type="ECO:0000250" key="1"/>
<evidence type="ECO:0000250" key="2">
    <source>
        <dbReference type="UniProtKB" id="P30624"/>
    </source>
</evidence>
<evidence type="ECO:0000250" key="3">
    <source>
        <dbReference type="UniProtKB" id="P69451"/>
    </source>
</evidence>
<evidence type="ECO:0000256" key="4">
    <source>
        <dbReference type="SAM" id="MobiDB-lite"/>
    </source>
</evidence>
<evidence type="ECO:0000269" key="5">
    <source>
    </source>
</evidence>
<evidence type="ECO:0000269" key="6">
    <source>
    </source>
</evidence>
<evidence type="ECO:0000269" key="7">
    <source>
    </source>
</evidence>
<evidence type="ECO:0000269" key="8">
    <source>
    </source>
</evidence>
<evidence type="ECO:0000269" key="9">
    <source>
    </source>
</evidence>
<evidence type="ECO:0000269" key="10">
    <source>
    </source>
</evidence>
<evidence type="ECO:0000269" key="11">
    <source>
    </source>
</evidence>
<evidence type="ECO:0000269" key="12">
    <source>
    </source>
</evidence>
<evidence type="ECO:0000269" key="13">
    <source>
    </source>
</evidence>
<evidence type="ECO:0000305" key="14"/>
<evidence type="ECO:0000305" key="15">
    <source>
    </source>
</evidence>
<evidence type="ECO:0000305" key="16">
    <source>
    </source>
</evidence>
<evidence type="ECO:0000305" key="17">
    <source>
    </source>
</evidence>
<organism>
    <name type="scientific">Saccharomyces cerevisiae (strain ATCC 204508 / S288c)</name>
    <name type="common">Baker's yeast</name>
    <dbReference type="NCBI Taxonomy" id="559292"/>
    <lineage>
        <taxon>Eukaryota</taxon>
        <taxon>Fungi</taxon>
        <taxon>Dikarya</taxon>
        <taxon>Ascomycota</taxon>
        <taxon>Saccharomycotina</taxon>
        <taxon>Saccharomycetes</taxon>
        <taxon>Saccharomycetales</taxon>
        <taxon>Saccharomycetaceae</taxon>
        <taxon>Saccharomyces</taxon>
    </lineage>
</organism>
<feature type="chain" id="PRO_0000193122" description="Long-chain-fatty-acid--CoA ligase 4">
    <location>
        <begin position="1"/>
        <end position="694"/>
    </location>
</feature>
<feature type="region of interest" description="Disordered" evidence="4">
    <location>
        <begin position="1"/>
        <end position="21"/>
    </location>
</feature>
<feature type="short sequence motif" description="FACS" evidence="2">
    <location>
        <begin position="527"/>
        <end position="576"/>
    </location>
</feature>
<feature type="binding site" evidence="3">
    <location>
        <begin position="269"/>
        <end position="280"/>
    </location>
    <ligand>
        <name>ATP</name>
        <dbReference type="ChEBI" id="CHEBI:30616"/>
    </ligand>
</feature>
<feature type="sequence conflict" description="In Ref. 1; CAA88635." evidence="14" ref="1">
    <original>N</original>
    <variation>G</variation>
    <location>
        <position position="552"/>
    </location>
</feature>
<feature type="sequence conflict" description="In Ref. 1; CAA88635." evidence="14" ref="1">
    <original>V</original>
    <variation>G</variation>
    <location>
        <position position="631"/>
    </location>
</feature>
<comment type="function">
    <text evidence="5 6 9 12 13">Activates long-chain fatty acids (LCFA) by esterification of the fatty acids into metabolically active CoA-thioesters for subsequent degradation or incorporation into phospholipids. Also facilitates the transport of LCFAs into the cell, either by active transport or by decreasing the intracellular LCFA concentration (PubMed:11477098, PubMed:12601005, PubMed:7962057). Contributes, with FAA1, to the activation of imported myristate (PubMed:7962057). Also involved in long-chain base (LCB) uptake. In contrast ot LCFA uptake, LCB uptake does not require ATP, suggesting that the enzyme is directly involved in LCB uptake (PubMed:27136724). Involved in the sphingolipid-to-glycerolipid metabolic pathway, converting the sphingolipid metabolite hexadecenoic acid to hexadecenoyl-CoA, which is then further converted to glycerolipids (PubMed:22633490).</text>
</comment>
<comment type="catalytic activity">
    <reaction evidence="5">
        <text>a long-chain fatty acid + ATP + CoA = a long-chain fatty acyl-CoA + AMP + diphosphate</text>
        <dbReference type="Rhea" id="RHEA:15421"/>
        <dbReference type="ChEBI" id="CHEBI:30616"/>
        <dbReference type="ChEBI" id="CHEBI:33019"/>
        <dbReference type="ChEBI" id="CHEBI:57287"/>
        <dbReference type="ChEBI" id="CHEBI:57560"/>
        <dbReference type="ChEBI" id="CHEBI:83139"/>
        <dbReference type="ChEBI" id="CHEBI:456215"/>
        <dbReference type="EC" id="6.2.1.3"/>
    </reaction>
</comment>
<comment type="catalytic activity">
    <reaction evidence="5">
        <text>(9Z)-hexadecenoate + ATP + CoA = (9Z)-hexadecenoyl-CoA + AMP + diphosphate</text>
        <dbReference type="Rhea" id="RHEA:33647"/>
        <dbReference type="ChEBI" id="CHEBI:30616"/>
        <dbReference type="ChEBI" id="CHEBI:32372"/>
        <dbReference type="ChEBI" id="CHEBI:33019"/>
        <dbReference type="ChEBI" id="CHEBI:57287"/>
        <dbReference type="ChEBI" id="CHEBI:61540"/>
        <dbReference type="ChEBI" id="CHEBI:456215"/>
    </reaction>
    <physiologicalReaction direction="left-to-right" evidence="15">
        <dbReference type="Rhea" id="RHEA:33648"/>
    </physiologicalReaction>
</comment>
<comment type="catalytic activity">
    <reaction evidence="5">
        <text>(9Z)-octadecenoate + ATP + CoA = (9Z)-octadecenoyl-CoA + AMP + diphosphate</text>
        <dbReference type="Rhea" id="RHEA:33607"/>
        <dbReference type="ChEBI" id="CHEBI:30616"/>
        <dbReference type="ChEBI" id="CHEBI:30823"/>
        <dbReference type="ChEBI" id="CHEBI:33019"/>
        <dbReference type="ChEBI" id="CHEBI:57287"/>
        <dbReference type="ChEBI" id="CHEBI:57387"/>
        <dbReference type="ChEBI" id="CHEBI:456215"/>
    </reaction>
    <physiologicalReaction direction="left-to-right" evidence="15">
        <dbReference type="Rhea" id="RHEA:33608"/>
    </physiologicalReaction>
</comment>
<comment type="catalytic activity">
    <reaction evidence="9 10">
        <text>hexadecanoate + ATP + CoA = hexadecanoyl-CoA + AMP + diphosphate</text>
        <dbReference type="Rhea" id="RHEA:30751"/>
        <dbReference type="ChEBI" id="CHEBI:7896"/>
        <dbReference type="ChEBI" id="CHEBI:30616"/>
        <dbReference type="ChEBI" id="CHEBI:33019"/>
        <dbReference type="ChEBI" id="CHEBI:57287"/>
        <dbReference type="ChEBI" id="CHEBI:57379"/>
        <dbReference type="ChEBI" id="CHEBI:456215"/>
    </reaction>
    <physiologicalReaction direction="left-to-right" evidence="16 17">
        <dbReference type="Rhea" id="RHEA:30752"/>
    </physiologicalReaction>
</comment>
<comment type="cofactor">
    <cofactor evidence="1">
        <name>Mg(2+)</name>
        <dbReference type="ChEBI" id="CHEBI:18420"/>
    </cofactor>
</comment>
<comment type="subunit">
    <text evidence="6">Interacts with FAT1.</text>
</comment>
<comment type="subcellular location">
    <subcellularLocation>
        <location evidence="8 11">Lipid droplet</location>
    </subcellularLocation>
</comment>
<comment type="domain">
    <text evidence="2">The FACS motif is required for catalytic activity and substrate specificity.</text>
</comment>
<comment type="miscellaneous">
    <text evidence="7">Present with 31200 molecules/cell in log phase SD medium.</text>
</comment>
<comment type="similarity">
    <text evidence="14">Belongs to the ATP-dependent AMP-binding enzyme family.</text>
</comment>
<reference key="1">
    <citation type="journal article" date="1994" name="J. Cell Biol.">
        <title>Saccharomyces cerevisiae contains four fatty acid activation (FAA) genes: an assessment of their role in regulating protein N-myristoylation and cellular lipid metabolism.</title>
        <authorList>
            <person name="Johnson D.R."/>
            <person name="Knoll L.J."/>
            <person name="Levin D.E."/>
            <person name="Gordon J.I."/>
        </authorList>
    </citation>
    <scope>NUCLEOTIDE SEQUENCE [GENOMIC DNA]</scope>
    <scope>FUNCTION</scope>
</reference>
<reference key="2">
    <citation type="journal article" date="1997" name="Nature">
        <title>The nucleotide sequence of Saccharomyces cerevisiae chromosome XIII.</title>
        <authorList>
            <person name="Bowman S."/>
            <person name="Churcher C.M."/>
            <person name="Badcock K."/>
            <person name="Brown D."/>
            <person name="Chillingworth T."/>
            <person name="Connor R."/>
            <person name="Dedman K."/>
            <person name="Devlin K."/>
            <person name="Gentles S."/>
            <person name="Hamlin N."/>
            <person name="Hunt S."/>
            <person name="Jagels K."/>
            <person name="Lye G."/>
            <person name="Moule S."/>
            <person name="Odell C."/>
            <person name="Pearson D."/>
            <person name="Rajandream M.A."/>
            <person name="Rice P."/>
            <person name="Skelton J."/>
            <person name="Walsh S.V."/>
            <person name="Whitehead S."/>
            <person name="Barrell B.G."/>
        </authorList>
    </citation>
    <scope>NUCLEOTIDE SEQUENCE [LARGE SCALE GENOMIC DNA]</scope>
    <source>
        <strain>ATCC 204508 / S288c</strain>
    </source>
</reference>
<reference key="3">
    <citation type="journal article" date="2014" name="G3 (Bethesda)">
        <title>The reference genome sequence of Saccharomyces cerevisiae: Then and now.</title>
        <authorList>
            <person name="Engel S.R."/>
            <person name="Dietrich F.S."/>
            <person name="Fisk D.G."/>
            <person name="Binkley G."/>
            <person name="Balakrishnan R."/>
            <person name="Costanzo M.C."/>
            <person name="Dwight S.S."/>
            <person name="Hitz B.C."/>
            <person name="Karra K."/>
            <person name="Nash R.S."/>
            <person name="Weng S."/>
            <person name="Wong E.D."/>
            <person name="Lloyd P."/>
            <person name="Skrzypek M.S."/>
            <person name="Miyasato S.R."/>
            <person name="Simison M."/>
            <person name="Cherry J.M."/>
        </authorList>
    </citation>
    <scope>GENOME REANNOTATION</scope>
    <source>
        <strain>ATCC 204508 / S288c</strain>
    </source>
</reference>
<reference key="4">
    <citation type="journal article" date="2001" name="J. Biol. Chem.">
        <title>The acyl-CoA synthetases encoded within FAA1 and FAA4 in Saccharomyces cerevisiae function as components of the fatty acid transport system linking import, activation, and intracellular utilization.</title>
        <authorList>
            <person name="Faergeman N.J."/>
            <person name="Black P.N."/>
            <person name="Zhao X.D."/>
            <person name="Knudsen J."/>
            <person name="DiRusso C.C."/>
        </authorList>
    </citation>
    <scope>FUNCTION</scope>
</reference>
<reference key="5">
    <citation type="journal article" date="2003" name="J. Biol. Chem.">
        <title>Vectorial acylation in Saccharomyces cerevisiae. Fat1p and fatty acyl-CoA synthetase are interacting components of a fatty acid import complex.</title>
        <authorList>
            <person name="Zou Z."/>
            <person name="Tong F."/>
            <person name="Faergeman N.J."/>
            <person name="Boersting C."/>
            <person name="Black P.N."/>
            <person name="DiRusso C.C."/>
        </authorList>
    </citation>
    <scope>FUNCTION</scope>
    <scope>INTERACTION WITH FAT1</scope>
</reference>
<reference key="6">
    <citation type="journal article" date="2003" name="Nature">
        <title>Global analysis of protein expression in yeast.</title>
        <authorList>
            <person name="Ghaemmaghami S."/>
            <person name="Huh W.-K."/>
            <person name="Bower K."/>
            <person name="Howson R.W."/>
            <person name="Belle A."/>
            <person name="Dephoure N."/>
            <person name="O'Shea E.K."/>
            <person name="Weissman J.S."/>
        </authorList>
    </citation>
    <scope>LEVEL OF PROTEIN EXPRESSION [LARGE SCALE ANALYSIS]</scope>
</reference>
<reference key="7">
    <citation type="journal article" date="2011" name="Biochim. Biophys. Acta">
        <title>Lipid particles/droplets of the yeast Saccharomyces cerevisiae revisited: lipidome meets proteome.</title>
        <authorList>
            <person name="Grillitsch K."/>
            <person name="Connerth M."/>
            <person name="Kofeler H."/>
            <person name="Arrey T.N."/>
            <person name="Rietschel B."/>
            <person name="Wagner B."/>
            <person name="Karas M."/>
            <person name="Daum G."/>
        </authorList>
    </citation>
    <scope>SUBCELLULAR LOCATION</scope>
</reference>
<reference key="8">
    <citation type="journal article" date="2012" name="Mol. Cell">
        <title>The Sjogren-Larsson syndrome gene encodes a hexadecenal dehydrogenase of the sphingosine 1-phosphate degradation pathway.</title>
        <authorList>
            <person name="Nakahara K."/>
            <person name="Ohkuni A."/>
            <person name="Kitamura T."/>
            <person name="Abe K."/>
            <person name="Naganuma T."/>
            <person name="Ohno Y."/>
            <person name="Zoeller R.A."/>
            <person name="Kihara A."/>
        </authorList>
    </citation>
    <scope>FUNCTION</scope>
    <scope>CATALYTIC ACTIVITY</scope>
</reference>
<reference key="9">
    <citation type="journal article" date="2012" name="Proc. Natl. Acad. Sci. U.S.A.">
        <title>N-terminal acetylome analyses and functional insights of the N-terminal acetyltransferase NatB.</title>
        <authorList>
            <person name="Van Damme P."/>
            <person name="Lasa M."/>
            <person name="Polevoda B."/>
            <person name="Gazquez C."/>
            <person name="Elosegui-Artola A."/>
            <person name="Kim D.S."/>
            <person name="De Juan-Pardo E."/>
            <person name="Demeyer K."/>
            <person name="Hole K."/>
            <person name="Larrea E."/>
            <person name="Timmerman E."/>
            <person name="Prieto J."/>
            <person name="Arnesen T."/>
            <person name="Sherman F."/>
            <person name="Gevaert K."/>
            <person name="Aldabe R."/>
        </authorList>
    </citation>
    <scope>IDENTIFICATION BY MASS SPECTROMETRY [LARGE SCALE ANALYSIS]</scope>
</reference>
<reference key="10">
    <citation type="journal article" date="2013" name="Biochem. Biophys. Res. Commun.">
        <title>Identification of acyl-CoA synthetases involved in the mammalian sphingosine 1-phosphate metabolic pathway.</title>
        <authorList>
            <person name="Ohkuni A."/>
            <person name="Ohno Y."/>
            <person name="Kihara A."/>
        </authorList>
    </citation>
    <scope>CATALYTIC ACTIVITY</scope>
</reference>
<reference key="11">
    <citation type="journal article" date="2014" name="J. Lipid Res.">
        <title>High-confidence proteomic analysis of yeast lipid droplets identifies additional droplet proteins and reveals connections to dolichol synthesis and sterol acetylation.</title>
        <authorList>
            <person name="Currie E."/>
            <person name="Guo X."/>
            <person name="Christiano R."/>
            <person name="Chitraju C."/>
            <person name="Kory N."/>
            <person name="Harrison K."/>
            <person name="Haas J."/>
            <person name="Walther T.C."/>
            <person name="Farese R.V. Jr."/>
        </authorList>
    </citation>
    <scope>SUBCELLULAR LOCATION</scope>
</reference>
<reference key="12">
    <citation type="journal article" date="2016" name="Sci. Rep.">
        <title>Long-chain bases of sphingolipids are transported into cells via the acyl-CoA synthetases.</title>
        <authorList>
            <person name="Narita T."/>
            <person name="Naganuma T."/>
            <person name="Sase Y."/>
            <person name="Kihara A."/>
        </authorList>
    </citation>
    <scope>FUNCTION</scope>
</reference>
<keyword id="KW-0067">ATP-binding</keyword>
<keyword id="KW-0276">Fatty acid metabolism</keyword>
<keyword id="KW-0436">Ligase</keyword>
<keyword id="KW-0551">Lipid droplet</keyword>
<keyword id="KW-0443">Lipid metabolism</keyword>
<keyword id="KW-0460">Magnesium</keyword>
<keyword id="KW-0547">Nucleotide-binding</keyword>
<keyword id="KW-1185">Reference proteome</keyword>